<evidence type="ECO:0000250" key="1">
    <source>
        <dbReference type="UniProtKB" id="Q6KCD5"/>
    </source>
</evidence>
<evidence type="ECO:0000256" key="2">
    <source>
        <dbReference type="SAM" id="MobiDB-lite"/>
    </source>
</evidence>
<evidence type="ECO:0000269" key="3">
    <source>
    </source>
</evidence>
<evidence type="ECO:0000269" key="4">
    <source>
    </source>
</evidence>
<evidence type="ECO:0000269" key="5">
    <source>
    </source>
</evidence>
<evidence type="ECO:0000269" key="6">
    <source>
    </source>
</evidence>
<evidence type="ECO:0000269" key="7">
    <source>
    </source>
</evidence>
<evidence type="ECO:0000269" key="8">
    <source>
    </source>
</evidence>
<evidence type="ECO:0000269" key="9">
    <source>
    </source>
</evidence>
<evidence type="ECO:0000269" key="10">
    <source>
    </source>
</evidence>
<evidence type="ECO:0000269" key="11">
    <source>
    </source>
</evidence>
<evidence type="ECO:0000269" key="12">
    <source>
    </source>
</evidence>
<evidence type="ECO:0000269" key="13">
    <source>
    </source>
</evidence>
<evidence type="ECO:0000269" key="14">
    <source>
    </source>
</evidence>
<evidence type="ECO:0000269" key="15">
    <source>
    </source>
</evidence>
<evidence type="ECO:0000269" key="16">
    <source>
    </source>
</evidence>
<evidence type="ECO:0000269" key="17">
    <source>
    </source>
</evidence>
<evidence type="ECO:0000269" key="18">
    <source>
    </source>
</evidence>
<evidence type="ECO:0000269" key="19">
    <source>
    </source>
</evidence>
<evidence type="ECO:0000303" key="20">
    <source>
    </source>
</evidence>
<evidence type="ECO:0000303" key="21">
    <source>
    </source>
</evidence>
<evidence type="ECO:0000303" key="22">
    <source>
    </source>
</evidence>
<evidence type="ECO:0000303" key="23">
    <source>
    </source>
</evidence>
<evidence type="ECO:0000303" key="24">
    <source ref="4"/>
</evidence>
<evidence type="ECO:0000305" key="25"/>
<evidence type="ECO:0007744" key="26">
    <source>
        <dbReference type="PDB" id="6WG3"/>
    </source>
</evidence>
<evidence type="ECO:0007744" key="27">
    <source>
        <dbReference type="PDB" id="6WGE"/>
    </source>
</evidence>
<evidence type="ECO:0007744" key="28">
    <source>
    </source>
</evidence>
<evidence type="ECO:0007744" key="29">
    <source>
    </source>
</evidence>
<evidence type="ECO:0007744" key="30">
    <source>
    </source>
</evidence>
<evidence type="ECO:0007744" key="31">
    <source>
    </source>
</evidence>
<evidence type="ECO:0007744" key="32">
    <source>
    </source>
</evidence>
<evidence type="ECO:0007744" key="33">
    <source>
    </source>
</evidence>
<evidence type="ECO:0007744" key="34">
    <source>
    </source>
</evidence>
<evidence type="ECO:0007744" key="35">
    <source>
    </source>
</evidence>
<evidence type="ECO:0007744" key="36">
    <source>
    </source>
</evidence>
<evidence type="ECO:0007744" key="37">
    <source>
    </source>
</evidence>
<keyword id="KW-0002">3D-structure</keyword>
<keyword id="KW-0007">Acetylation</keyword>
<keyword id="KW-0010">Activator</keyword>
<keyword id="KW-0025">Alternative splicing</keyword>
<keyword id="KW-0131">Cell cycle</keyword>
<keyword id="KW-0158">Chromosome</keyword>
<keyword id="KW-0217">Developmental protein</keyword>
<keyword id="KW-0225">Disease variant</keyword>
<keyword id="KW-0991">Intellectual disability</keyword>
<keyword id="KW-0539">Nucleus</keyword>
<keyword id="KW-0597">Phosphoprotein</keyword>
<keyword id="KW-1267">Proteomics identification</keyword>
<keyword id="KW-1185">Reference proteome</keyword>
<keyword id="KW-0677">Repeat</keyword>
<keyword id="KW-0804">Transcription</keyword>
<keyword id="KW-0805">Transcription regulation</keyword>
<accession>Q6KC79</accession>
<accession>Q6KCD6</accession>
<accession>Q6N080</accession>
<accession>Q6ZT92</accession>
<accession>Q7Z2E6</accession>
<accession>Q8N4M5</accession>
<accession>Q9Y6Y3</accession>
<accession>Q9Y6Y4</accession>
<sequence length="2804" mass="316051">MNGDMPHVPITTLAGIASLTDLLNQLPLPSPLPATTTKSLLFNARIAEEVNCLLACRDDNLVSQLVHSLNQVSTDHIELKDNLGSDDPEGDIPVLLQAVLARSPNVFREKSMQNRYVQSGMMMSQYKLSQNSMHSSPASSNYQQTTISHSPSSRFVPPQTSSGNRFMPQQNSPVPSPYAPQSPAGYMPYSHPSSYTTHPQMQQASVSSPIVAGGLRNIHDNKVSGPLSGNSANHHADNPRHGSSEDYLHMVHRLSSDDGDSSTMRNAASFPLRSPQPVCSPAGSEGTPKGSRPPLILQSQSLPCSSPRDVPPDILLDSPERKQKKQKKMKLGKDEKEQSEKAAMYDIISSPSKDSTKLTLRLSRVRSSDMDQQEDMISGVENSNVSENDIPFNVQYPGQTSKTPITPQDINRPLNAAQCLSQQEQTAFLPANQVPVLQQNTSVAAKQPQTSVVQNQQQISQQGPIYDEVELDALAEIERIERESAIERERFSKEVQDKDKPLKKRKQDSYPQEAGGATGGNRPASQETGSTGNGSRPALMVSIDLHQAGRVDSQASITQDSDSIKKPEEIKQCNDAPVSVLQEDIVGSLKSTPENHPETPKKKSDPELSKSEMKQSESRLAESKPNENRLVETKSSENKLETKVETQTEELKQNESRTTECKQNESTIVEPKQNENRLSDTKPNDNKQNNGRSETTKSRPETPKQKGESRPETPKQKSDGHPETPKQKGDGRPETPKQKGESRPETPKQKNEGRPETPKHRHDNRRDSGKPSTEKKPEVSKHKQDTKSDSPRLKSERAEALKQRPDGRSVSESLRRDHDNKQKSDDRGESERHRGDQSRVRRPETLRSSSRNEHGIKSDSSKTDKLERKHRHESGDSRERPSSGEQKSRPDSPRVKQGDSNKSRSDKLGFKSPTSKDDKRTEGNKSKVDTNKAHPDNKAEFPSYLLGGRSGALKNFVIPKIKRDKDGNVTQETKKMEMKGEPKDKVEKIGLVEDLNKGAKPVVVLQKLSLDDVQKLIKDREDKSRSSLKPIKNKPSKSNKGSIDQSVLKELPPELLAEIESTMPLCERVKMNKRKRSTVNEKPKYAEISSDEDNDSDEAFESSRKRHKKDDDKAWEYEERDRRSSGDHRRSGHSHEGRRSSGGGRYRNRSPSDSDMEDYSPPPSLSEVARKMKKKEKQKKRKAYEPKLTPEEMMDSSTFKRFTASIENILDNLEDMDFTAFGDDDEIPQELLLGKHQLNELGSESAKIKAMGIMDKLSTDKTVKVLNILEKNIQDGSKLSTLLNHNNDTEEEERLWRDLIMERVTKSADACLTTINIMTSPNMPKAVYIEDVIERVIQYTKFHLQNTLYPQYDPVYRLDPHGGGLLSSKAKRAKCSTHKQRVIVMLYNKVCDIVSSLSELLEIQLLTDTTILQVSSMGITPFFVENVSELQLCAIKLVTAVFSRYEKHRQLILEEIFTSLARLPTSKRSLRNFRLNSSDMDGEPMYIQMVTALVLQLIQCVVHLPSSEKDSNAEEDSNKKIDQDVVITNSYETAMRTAQNFLSIFLKKCGSKQGEEDYRPLFENFVQDLLSTVNKPEWPAAELLLSLLGRLLVHQFSNKSTEMALRVASLDYLGTVAARLRKDAVTSKMDQGSIERILKQVSGGEDEIQQLQKALLDYLDENTETDPSLVFSRKFYIAQWFRDTTLETEKAMKSQKDEESSEGTHHAKEIETTGQIMHRAENRKKFLRSIIKTTPSQFSTLKMNSDTVDYDDACLIVRYLASMRPFAQSFDIYLTQILRVLGENAIAVRTKAMKCLSEVVAVDPSILARLDMQRGVHGRLMDNSTSVREAAVELLGRFVLCRPQLAEQYYDMLIERILDTGISVRKRVIKILRDICIEQPTFPKITEMCVKMIRRVNDEEGIKKLVNETFQKLWFTPTPHNDKEAMTRKILNITDVVAACRDTGYDWFEQLLQNLLKSEEDSSYKPVKKACTQLVDNLVEHILKYEESLADSDNKGVNSGRLVACITTLFLFSKIRPQLMVKHAMTMQPYLTTKCSTQNDFMVICNVAKILELVVPLMEHPSETFLATIEEDLMKLIIKYGMTVVQHCVSCLGAVVNKVTQNFKFVWACFNRYYGAISKLKSQHQEDPNNTSLLTNKPALLRSLFTVGALCRHFDFDLEDFKGNSKVNIKDKVLELLMYFTKHSDEEVQTKAIIGLGFAFIQHPSLMFEQEVKNLYNNILSDKNSSVNLKIQVLKNLQTYLQEEDTRMQQADRDWKKVAKQEDLKEMGDVSSGMSSSIMQLYLKQVLEAFFHTQSSVRHFALNVIALTLNQGLIHPVQCVPYLIAMGTDPEPAMRNKADQQLVEIDKKYAGFIHMKAVAGMKMSYQVQQAINTCLKDPVRGFRQDESSSALCSHLYSMIRGNRQHRRAFLISLLNLFDDTAKTDVTMLLYIADNLACFPYQTQEEPLFIMHHIDITLSVSGSNLLQSFKESMVKDKRKERKSSPSKENESSDSEEEVSRPRKSRKRVDSDSDSDSEDDINSVMKCLPENSAPLIEFANVSQGILLLLMLKQHLKNLCGFSDSKIQKYSPSESAKVYDKAINRKTGVHFHPKQTLDFLRSDMANSKITEEVKRSIVKQYLDFKLLMEHLDPDEEEEEGEVSASTNARNKAITSLLGGGSPKNNTAAETEDDESDGEDRGGGTSGSLRRSKRNSDSTELAAQMNESVDVMDVIAICCPKYKDRPQIARVVQKTSSGFSVQWMAGSYSGSWTEAKRRDGRKLVPWVDTIKESDIIYKKIALTSANKLTNKVVQTLRSLYAAKDGTSS</sequence>
<gene>
    <name type="primary">NIPBL</name>
    <name type="synonym">IDN3</name>
    <name evidence="23" type="synonym">SCC2</name>
</gene>
<feature type="chain" id="PRO_0000218596" description="Nipped-B-like protein">
    <location>
        <begin position="1"/>
        <end position="2804"/>
    </location>
</feature>
<feature type="repeat" description="HEAT 1">
    <location>
        <begin position="1767"/>
        <end position="1805"/>
    </location>
</feature>
<feature type="repeat" description="HEAT 2">
    <location>
        <begin position="1843"/>
        <end position="1881"/>
    </location>
</feature>
<feature type="repeat" description="HEAT 3">
    <location>
        <begin position="1945"/>
        <end position="1984"/>
    </location>
</feature>
<feature type="repeat" description="HEAT 4">
    <location>
        <begin position="2227"/>
        <end position="2267"/>
    </location>
</feature>
<feature type="repeat" description="HEAT 5">
    <location>
        <begin position="2313"/>
        <end position="2351"/>
    </location>
</feature>
<feature type="region of interest" description="Disordered" evidence="2">
    <location>
        <begin position="128"/>
        <end position="340"/>
    </location>
</feature>
<feature type="region of interest" description="Disordered" evidence="2">
    <location>
        <begin position="482"/>
        <end position="946"/>
    </location>
</feature>
<feature type="region of interest" description="Disordered" evidence="2">
    <location>
        <begin position="1017"/>
        <end position="1047"/>
    </location>
</feature>
<feature type="region of interest" description="Disordered" evidence="2">
    <location>
        <begin position="1060"/>
        <end position="1191"/>
    </location>
</feature>
<feature type="region of interest" description="Disordered" evidence="2">
    <location>
        <begin position="1691"/>
        <end position="1710"/>
    </location>
</feature>
<feature type="region of interest" description="Disordered" evidence="2">
    <location>
        <begin position="2473"/>
        <end position="2520"/>
    </location>
</feature>
<feature type="region of interest" description="Disordered" evidence="2">
    <location>
        <begin position="2651"/>
        <end position="2696"/>
    </location>
</feature>
<feature type="short sequence motif" description="PxVxL motif" evidence="12 17">
    <location>
        <begin position="996"/>
        <end position="1009"/>
    </location>
</feature>
<feature type="compositionally biased region" description="Polar residues" evidence="2">
    <location>
        <begin position="128"/>
        <end position="173"/>
    </location>
</feature>
<feature type="compositionally biased region" description="Polar residues" evidence="2">
    <location>
        <begin position="191"/>
        <end position="208"/>
    </location>
</feature>
<feature type="compositionally biased region" description="Basic and acidic residues" evidence="2">
    <location>
        <begin position="234"/>
        <end position="249"/>
    </location>
</feature>
<feature type="compositionally biased region" description="Basic and acidic residues" evidence="2">
    <location>
        <begin position="331"/>
        <end position="340"/>
    </location>
</feature>
<feature type="compositionally biased region" description="Basic and acidic residues" evidence="2">
    <location>
        <begin position="482"/>
        <end position="500"/>
    </location>
</feature>
<feature type="compositionally biased region" description="Polar residues" evidence="2">
    <location>
        <begin position="523"/>
        <end position="534"/>
    </location>
</feature>
<feature type="compositionally biased region" description="Basic and acidic residues" evidence="2">
    <location>
        <begin position="562"/>
        <end position="572"/>
    </location>
</feature>
<feature type="compositionally biased region" description="Basic and acidic residues" evidence="2">
    <location>
        <begin position="593"/>
        <end position="663"/>
    </location>
</feature>
<feature type="compositionally biased region" description="Basic and acidic residues" evidence="2">
    <location>
        <begin position="672"/>
        <end position="685"/>
    </location>
</feature>
<feature type="compositionally biased region" description="Basic and acidic residues" evidence="2">
    <location>
        <begin position="694"/>
        <end position="939"/>
    </location>
</feature>
<feature type="compositionally biased region" description="Acidic residues" evidence="2">
    <location>
        <begin position="1089"/>
        <end position="1100"/>
    </location>
</feature>
<feature type="compositionally biased region" description="Basic and acidic residues" evidence="2">
    <location>
        <begin position="1109"/>
        <end position="1139"/>
    </location>
</feature>
<feature type="compositionally biased region" description="Basic residues" evidence="2">
    <location>
        <begin position="1171"/>
        <end position="1182"/>
    </location>
</feature>
<feature type="compositionally biased region" description="Basic and acidic residues" evidence="2">
    <location>
        <begin position="2473"/>
        <end position="2489"/>
    </location>
</feature>
<feature type="compositionally biased region" description="Acidic residues" evidence="2">
    <location>
        <begin position="2510"/>
        <end position="2519"/>
    </location>
</feature>
<feature type="modified residue" description="Phosphoserine" evidence="30 36">
    <location>
        <position position="150"/>
    </location>
</feature>
<feature type="modified residue" description="Phosphoserine" evidence="30">
    <location>
        <position position="162"/>
    </location>
</feature>
<feature type="modified residue" description="Phosphoserine" evidence="36">
    <location>
        <position position="243"/>
    </location>
</feature>
<feature type="modified residue" description="Phosphoserine" evidence="34">
    <location>
        <position position="256"/>
    </location>
</feature>
<feature type="modified residue" description="Phosphoserine" evidence="36">
    <location>
        <position position="274"/>
    </location>
</feature>
<feature type="modified residue" description="Phosphoserine" evidence="36 37">
    <location>
        <position position="280"/>
    </location>
</feature>
<feature type="modified residue" description="Phosphoserine" evidence="1">
    <location>
        <position position="284"/>
    </location>
</feature>
<feature type="modified residue" description="Phosphoserine" evidence="1">
    <location>
        <position position="301"/>
    </location>
</feature>
<feature type="modified residue" description="Phosphoserine" evidence="30 36">
    <location>
        <position position="306"/>
    </location>
</feature>
<feature type="modified residue" description="Phosphoserine" evidence="29 34 36">
    <location>
        <position position="318"/>
    </location>
</feature>
<feature type="modified residue" description="Phosphoserine" evidence="30 34 35 36">
    <location>
        <position position="350"/>
    </location>
</feature>
<feature type="modified residue" description="Phosphothreonine" evidence="29">
    <location>
        <position position="713"/>
    </location>
</feature>
<feature type="modified residue" description="Phosphothreonine" evidence="29">
    <location>
        <position position="746"/>
    </location>
</feature>
<feature type="modified residue" description="Phosphoserine" evidence="30 36">
    <location>
        <position position="912"/>
    </location>
</feature>
<feature type="modified residue" description="N6-acetyllysine" evidence="1">
    <location>
        <position position="1082"/>
    </location>
</feature>
<feature type="modified residue" description="Phosphoserine" evidence="30 33">
    <location>
        <position position="1089"/>
    </location>
</feature>
<feature type="modified residue" description="Phosphoserine" evidence="30 33">
    <location>
        <position position="1090"/>
    </location>
</feature>
<feature type="modified residue" description="Phosphoserine" evidence="29 30 33 35">
    <location>
        <position position="1096"/>
    </location>
</feature>
<feature type="modified residue" description="Phosphoserine" evidence="30 33 35">
    <location>
        <position position="1150"/>
    </location>
</feature>
<feature type="modified residue" description="Phosphoserine" evidence="30 35">
    <location>
        <position position="1152"/>
    </location>
</feature>
<feature type="modified residue" description="Phosphoserine" evidence="30 35">
    <location>
        <position position="1154"/>
    </location>
</feature>
<feature type="modified residue" description="Phosphotyrosine" evidence="1">
    <location>
        <position position="1159"/>
    </location>
</feature>
<feature type="modified residue" description="Phosphoserine" evidence="30 35">
    <location>
        <position position="1160"/>
    </location>
</feature>
<feature type="modified residue" description="Phosphothreonine" evidence="36">
    <location>
        <position position="1189"/>
    </location>
</feature>
<feature type="modified residue" description="Phosphoserine" evidence="36">
    <location>
        <position position="1197"/>
    </location>
</feature>
<feature type="modified residue" description="Phosphoserine" evidence="1">
    <location>
        <position position="2493"/>
    </location>
</feature>
<feature type="modified residue" description="Phosphoserine" evidence="30 35">
    <location>
        <position position="2509"/>
    </location>
</feature>
<feature type="modified residue" description="Phosphoserine" evidence="30 35">
    <location>
        <position position="2511"/>
    </location>
</feature>
<feature type="modified residue" description="Phosphoserine" evidence="30 35">
    <location>
        <position position="2513"/>
    </location>
</feature>
<feature type="modified residue" description="Phosphoserine" evidence="30 35">
    <location>
        <position position="2515"/>
    </location>
</feature>
<feature type="modified residue" description="Phosphoserine" evidence="36">
    <location>
        <position position="2652"/>
    </location>
</feature>
<feature type="modified residue" description="Phosphoserine" evidence="28 29 30 31 32 33 34 35 36 37">
    <location>
        <position position="2658"/>
    </location>
</feature>
<feature type="modified residue" description="Phosphothreonine" evidence="29 35 36">
    <location>
        <position position="2667"/>
    </location>
</feature>
<feature type="modified residue" description="Phosphoserine" evidence="34 35 36 37">
    <location>
        <position position="2672"/>
    </location>
</feature>
<feature type="splice variant" id="VSP_011091" description="In isoform 3." evidence="20">
    <location>
        <begin position="1102"/>
        <end position="2804"/>
    </location>
</feature>
<feature type="splice variant" id="VSP_011092" description="In isoform 2." evidence="21 22 24">
    <original>SLRRSKRNSDSTEL</original>
    <variation>VRRRRSQRISQRIT</variation>
    <location>
        <begin position="2684"/>
        <end position="2697"/>
    </location>
</feature>
<feature type="splice variant" id="VSP_011093" description="In isoform 2." evidence="21 22 24">
    <location>
        <begin position="2698"/>
        <end position="2804"/>
    </location>
</feature>
<feature type="sequence variant" id="VAR_072996" description="In CDLS1; strongly inhibits interaction with SCC4." evidence="13 17">
    <original>G</original>
    <variation>R</variation>
    <location>
        <position position="15"/>
    </location>
</feature>
<feature type="sequence variant" id="VAR_072997" description="In CDLS1; strongly inhibits interaction with SCC4." evidence="13">
    <original>P</original>
    <variation>Q</variation>
    <location>
        <position position="29"/>
    </location>
</feature>
<feature type="sequence variant" id="VAR_072998" description="In CDLS1." evidence="15">
    <original>N</original>
    <variation>I</variation>
    <location>
        <position position="70"/>
    </location>
</feature>
<feature type="sequence variant" id="VAR_072999" description="In CDLS1; uncertain significance." evidence="10">
    <original>S</original>
    <variation>L</variation>
    <location>
        <position position="73"/>
    </location>
</feature>
<feature type="sequence variant" id="VAR_073000" description="In CDLS1; no effect on interaction with SCC4." evidence="13">
    <original>S</original>
    <variation>T</variation>
    <location>
        <position position="111"/>
    </location>
</feature>
<feature type="sequence variant" id="VAR_019518" description="In dbSNP:rs1390490298.">
    <original>S</original>
    <variation>N</variation>
    <location>
        <position position="135"/>
    </location>
</feature>
<feature type="sequence variant" id="VAR_073001" description="In CDLS1; no effect on interaction with SCC4." evidence="13 15">
    <original>A</original>
    <variation>S</variation>
    <location>
        <position position="179"/>
    </location>
</feature>
<feature type="sequence variant" id="VAR_073002" description="In CDLS1; benign; no effect on interaction with SCC4; dbSNP:rs142923613." evidence="13">
    <original>A</original>
    <variation>T</variation>
    <location>
        <position position="179"/>
    </location>
</feature>
<feature type="sequence variant" id="VAR_073003" description="In CDLS1; no effect on interaction with SCC4." evidence="13">
    <original>P</original>
    <variation>L</variation>
    <location>
        <position position="192"/>
    </location>
</feature>
<feature type="sequence variant" id="VAR_073004" description="In CDLS1; no effect on interaction with SCC4; dbSNP:rs587784042." evidence="13 15">
    <original>D</original>
    <variation>G</variation>
    <location>
        <position position="246"/>
    </location>
</feature>
<feature type="sequence variant" id="VAR_073005" description="In CDLS1; no effect on interaction with SCC4." evidence="13">
    <original>L</original>
    <variation>V</variation>
    <location>
        <position position="254"/>
    </location>
</feature>
<feature type="sequence variant" id="VAR_038411" description="In dbSNP:rs16903425.">
    <original>S</original>
    <variation>A</variation>
    <location>
        <position position="261"/>
    </location>
</feature>
<feature type="sequence variant" id="VAR_073006" description="In CDLS1." evidence="15">
    <original>P</original>
    <variation>T</variation>
    <location>
        <position position="351"/>
    </location>
</feature>
<feature type="sequence variant" id="VAR_073007" description="In CDLS1." evidence="15">
    <original>K</original>
    <variation>N</variation>
    <location>
        <position position="357"/>
    </location>
</feature>
<feature type="sequence variant" id="VAR_038412" description="In dbSNP:rs2291703.">
    <original>N</original>
    <variation>S</variation>
    <location>
        <position position="384"/>
    </location>
</feature>
<feature type="sequence variant" id="VAR_021596" description="In dbSNP:rs3822471." evidence="5">
    <original>N</original>
    <variation>S</variation>
    <location>
        <position position="674"/>
    </location>
</feature>
<feature type="sequence variant" id="VAR_073008" description="In CDLS1; dbSNP:rs149629686." evidence="15">
    <original>R</original>
    <variation>Q</variation>
    <location>
        <position position="868"/>
    </location>
</feature>
<feature type="sequence variant" id="VAR_021597" description="In dbSNP:rs587783929." evidence="5">
    <original>I</original>
    <variation>V</variation>
    <location>
        <position position="1206"/>
    </location>
</feature>
<feature type="sequence variant" id="VAR_038413" description="In CDLS1; dbSNP:rs121918266." evidence="3">
    <location>
        <position position="1206"/>
    </location>
</feature>
<feature type="sequence variant" id="VAR_073009" description="In CDLS1." evidence="15">
    <original>E</original>
    <variation>K</variation>
    <location>
        <position position="1207"/>
    </location>
</feature>
<feature type="sequence variant" id="VAR_021598" description="In CDLS1; dbSNP:rs121918268." evidence="5">
    <original>A</original>
    <variation>G</variation>
    <location>
        <position position="1246"/>
    </location>
</feature>
<feature type="sequence variant" id="VAR_019519" description="In CDLS1." evidence="3">
    <original>C</original>
    <variation>R</variation>
    <location>
        <position position="1311"/>
    </location>
</feature>
<feature type="sequence variant" id="VAR_021599" description="In CDLS1." evidence="5">
    <original>L</original>
    <variation>P</variation>
    <location>
        <position position="1312"/>
    </location>
</feature>
<feature type="sequence variant" id="VAR_073010" description="In CDLS1." evidence="10">
    <original>H</original>
    <variation>P</variation>
    <location>
        <position position="1343"/>
    </location>
</feature>
<feature type="sequence variant" id="VAR_019520" description="In CDLS1." evidence="3">
    <original>L</original>
    <variation>R</variation>
    <location>
        <position position="1348"/>
    </location>
</feature>
<feature type="sequence variant" id="VAR_073011" description="In CDLS1; dbSNP:rs727503769." evidence="15">
    <original>V</original>
    <variation>L</variation>
    <location>
        <position position="1441"/>
    </location>
</feature>
<feature type="sequence variant" id="VAR_073012" description="In CDLS1." evidence="15">
    <original>V</original>
    <variation>F</variation>
    <location>
        <position position="1625"/>
    </location>
</feature>
<feature type="sequence variant" id="VAR_073013" description="In CDLS1." evidence="15">
    <original>I</original>
    <variation>L</variation>
    <location>
        <position position="1637"/>
    </location>
</feature>
<feature type="sequence variant" id="VAR_036164" description="In a breast cancer sample; somatic mutation." evidence="9">
    <original>E</original>
    <variation>K</variation>
    <location>
        <position position="1647"/>
    </location>
</feature>
<feature type="sequence variant" id="VAR_073014" description="In CDLS1." evidence="15">
    <original>N</original>
    <variation>H</variation>
    <location>
        <position position="1722"/>
    </location>
</feature>
<feature type="sequence variant" id="VAR_021600" description="In CDLS1." evidence="5">
    <original>R</original>
    <variation>L</variation>
    <location>
        <position position="1789"/>
    </location>
</feature>
<feature type="sequence variant" id="VAR_021601" description="In CDLS1." evidence="5">
    <original>D</original>
    <variation>V</variation>
    <location>
        <position position="1803"/>
    </location>
</feature>
<feature type="sequence variant" id="VAR_021602" description="In CDLS1." evidence="5">
    <original>R</original>
    <variation>T</variation>
    <location>
        <position position="1856"/>
    </location>
</feature>
<feature type="sequence variant" id="VAR_064544" description="In CDLS1." evidence="11">
    <location>
        <position position="1897"/>
    </location>
</feature>
<feature type="sequence variant" id="VAR_064545" description="In CDLS1; dbSNP:rs587784000." evidence="11">
    <original>G</original>
    <variation>A</variation>
    <location>
        <position position="2081"/>
    </location>
</feature>
<feature type="sequence variant" id="VAR_064546" description="In CDLS1." evidence="11">
    <original>S</original>
    <variation>I</variation>
    <location>
        <position position="2090"/>
    </location>
</feature>
<feature type="sequence variant" id="VAR_073015" description="In CDLS1." evidence="16">
    <original>C</original>
    <variation>F</variation>
    <location>
        <position position="2091"/>
    </location>
</feature>
<feature type="sequence variant" id="VAR_064547" description="In CDLS1." evidence="11">
    <original>L</original>
    <variation>P</variation>
    <location>
        <position position="2150"/>
    </location>
</feature>
<feature type="sequence variant" id="VAR_073016" description="In CDLS1." evidence="15">
    <location>
        <position position="2218"/>
    </location>
</feature>
<feature type="sequence variant" id="VAR_021603" description="In CDLS1; dbSNP:rs80358376." evidence="5 15">
    <original>R</original>
    <variation>C</variation>
    <location>
        <position position="2298"/>
    </location>
</feature>
<feature type="sequence variant" id="VAR_021604" description="In CDLS1; dbSNP:rs587784024." evidence="5">
    <original>R</original>
    <variation>H</variation>
    <location>
        <position position="2298"/>
    </location>
</feature>
<feature type="sequence variant" id="VAR_021605" description="In CDLS1." evidence="5">
    <original>G</original>
    <variation>R</variation>
    <location>
        <position position="2312"/>
    </location>
</feature>
<feature type="sequence variant" id="VAR_073017" description="In CDLS1; dbSNP:rs587784025." evidence="15">
    <original>G</original>
    <variation>V</variation>
    <location>
        <position position="2312"/>
    </location>
</feature>
<feature type="sequence variant" id="VAR_021606" description="In CDLS1." evidence="5">
    <original>G</original>
    <variation>A</variation>
    <location>
        <position position="2381"/>
    </location>
</feature>
<feature type="sequence variant" id="VAR_021607" description="In CDLS1; dbSNP:rs587784036." evidence="5">
    <original>A</original>
    <variation>T</variation>
    <location>
        <position position="2390"/>
    </location>
</feature>
<feature type="sequence variant" id="VAR_019521" description="In CDLS1; dbSNP:rs121918265." evidence="3">
    <original>Y</original>
    <variation>C</variation>
    <location>
        <position position="2430"/>
    </location>
</feature>
<feature type="sequence variant" id="VAR_073018" description="In CDLS1." evidence="15">
    <original>D</original>
    <variation>N</variation>
    <location>
        <position position="2433"/>
    </location>
</feature>
<feature type="sequence variant" id="VAR_021608" description="In CDLS1." evidence="5">
    <original>Y</original>
    <variation>H</variation>
    <location>
        <position position="2440"/>
    </location>
</feature>
<feature type="mutagenesis site" description="Abolishes interaction with CBX3; when associated with A-1005." evidence="12 17">
    <original>V</original>
    <variation>A</variation>
    <location>
        <position position="1003"/>
    </location>
</feature>
<feature type="mutagenesis site" description="Abolishes interaction with CBX5; when associated with E-1005." evidence="12">
    <original>V</original>
    <variation>E</variation>
    <location>
        <position position="1003"/>
    </location>
</feature>
<feature type="mutagenesis site" description="Abolishes interaction with CBX3; when associated with A-1003." evidence="12">
    <original>L</original>
    <variation>A</variation>
    <location>
        <position position="1005"/>
    </location>
</feature>
<feature type="mutagenesis site" description="Abolishes interaction with CBX5; when associated with E-1003." evidence="12">
    <original>L</original>
    <variation>E</variation>
    <location>
        <position position="1005"/>
    </location>
</feature>
<feature type="sequence conflict" description="In Ref. 3." evidence="25" ref="3">
    <original>S</original>
    <variation>F</variation>
    <location>
        <position position="318"/>
    </location>
</feature>
<feature type="sequence conflict" description="In Ref. 2; CAD98051/CAD98052." evidence="25" ref="2">
    <original>A</original>
    <variation>T</variation>
    <location>
        <position position="548"/>
    </location>
</feature>
<feature type="sequence conflict" description="In Ref. 2; CAD98051/CAD98052." evidence="25" ref="2">
    <original>N</original>
    <variation>S</variation>
    <location>
        <position position="574"/>
    </location>
</feature>
<feature type="sequence conflict" description="In Ref. 2; CAD98051/CAD98052." evidence="25" ref="2">
    <original>T</original>
    <variation>I</variation>
    <location>
        <position position="648"/>
    </location>
</feature>
<feature type="sequence conflict" description="In Ref. 2; CAD98051/CAD98052." evidence="25" ref="2">
    <original>M</original>
    <variation>K</variation>
    <location>
        <position position="1172"/>
    </location>
</feature>
<feature type="modified residue" description="Phosphothreonine" evidence="30">
    <location sequence="Q6KC79-2">
        <position position="2667"/>
    </location>
</feature>
<feature type="modified residue" description="Phosphoserine" evidence="30 35 37">
    <location sequence="Q6KC79-2">
        <position position="2672"/>
    </location>
</feature>
<protein>
    <recommendedName>
        <fullName>Nipped-B-like protein</fullName>
    </recommendedName>
    <alternativeName>
        <fullName>Delangin</fullName>
    </alternativeName>
    <alternativeName>
        <fullName>SCC2 homolog</fullName>
    </alternativeName>
</protein>
<organism>
    <name type="scientific">Homo sapiens</name>
    <name type="common">Human</name>
    <dbReference type="NCBI Taxonomy" id="9606"/>
    <lineage>
        <taxon>Eukaryota</taxon>
        <taxon>Metazoa</taxon>
        <taxon>Chordata</taxon>
        <taxon>Craniata</taxon>
        <taxon>Vertebrata</taxon>
        <taxon>Euteleostomi</taxon>
        <taxon>Mammalia</taxon>
        <taxon>Eutheria</taxon>
        <taxon>Euarchontoglires</taxon>
        <taxon>Primates</taxon>
        <taxon>Haplorrhini</taxon>
        <taxon>Catarrhini</taxon>
        <taxon>Hominidae</taxon>
        <taxon>Homo</taxon>
    </lineage>
</organism>
<dbReference type="EMBL" id="AJ627032">
    <property type="protein sequence ID" value="CAF25290.1"/>
    <property type="molecule type" value="mRNA"/>
</dbReference>
<dbReference type="EMBL" id="AJ640137">
    <property type="protein sequence ID" value="CAG26691.1"/>
    <property type="molecule type" value="mRNA"/>
</dbReference>
<dbReference type="EMBL" id="BX538177">
    <property type="protein sequence ID" value="CAD98051.1"/>
    <property type="molecule type" value="mRNA"/>
</dbReference>
<dbReference type="EMBL" id="BX538178">
    <property type="protein sequence ID" value="CAD98052.1"/>
    <property type="molecule type" value="mRNA"/>
</dbReference>
<dbReference type="EMBL" id="BX640644">
    <property type="protein sequence ID" value="CAE45790.1"/>
    <property type="status" value="ALT_FRAME"/>
    <property type="molecule type" value="mRNA"/>
</dbReference>
<dbReference type="EMBL" id="AK126804">
    <property type="protein sequence ID" value="BAC86701.1"/>
    <property type="status" value="ALT_INIT"/>
    <property type="molecule type" value="mRNA"/>
</dbReference>
<dbReference type="EMBL" id="AB019494">
    <property type="protein sequence ID" value="BAA77335.1"/>
    <property type="status" value="ALT_SEQ"/>
    <property type="molecule type" value="mRNA"/>
</dbReference>
<dbReference type="EMBL" id="AB019602">
    <property type="protein sequence ID" value="BAA77349.1"/>
    <property type="status" value="ALT_SEQ"/>
    <property type="molecule type" value="mRNA"/>
</dbReference>
<dbReference type="EMBL" id="BC033847">
    <property type="protein sequence ID" value="AAH33847.1"/>
    <property type="status" value="ALT_INIT"/>
    <property type="molecule type" value="mRNA"/>
</dbReference>
<dbReference type="CCDS" id="CCDS3920.1">
    <molecule id="Q6KC79-1"/>
</dbReference>
<dbReference type="CCDS" id="CCDS47198.1">
    <molecule id="Q6KC79-2"/>
</dbReference>
<dbReference type="RefSeq" id="NP_056199.2">
    <molecule id="Q6KC79-2"/>
    <property type="nucleotide sequence ID" value="NM_015384.4"/>
</dbReference>
<dbReference type="RefSeq" id="NP_597677.2">
    <molecule id="Q6KC79-1"/>
    <property type="nucleotide sequence ID" value="NM_133433.3"/>
</dbReference>
<dbReference type="RefSeq" id="XP_016864819.1">
    <property type="nucleotide sequence ID" value="XM_017009330.1"/>
</dbReference>
<dbReference type="PDB" id="6WG3">
    <property type="method" value="EM"/>
    <property type="resolution" value="5.30 A"/>
    <property type="chains" value="E=1163-2804"/>
</dbReference>
<dbReference type="PDB" id="6WGE">
    <property type="method" value="EM"/>
    <property type="resolution" value="3.90 A"/>
    <property type="chains" value="E=1163-2804"/>
</dbReference>
<dbReference type="PDB" id="7W1M">
    <property type="method" value="EM"/>
    <property type="resolution" value="6.50 A"/>
    <property type="chains" value="E=1164-2630"/>
</dbReference>
<dbReference type="PDBsum" id="6WG3"/>
<dbReference type="PDBsum" id="6WGE"/>
<dbReference type="PDBsum" id="7W1M"/>
<dbReference type="EMDB" id="EMD-21658"/>
<dbReference type="EMDB" id="EMD-21663"/>
<dbReference type="EMDB" id="EMD-32252"/>
<dbReference type="SMR" id="Q6KC79"/>
<dbReference type="BioGRID" id="117363">
    <property type="interactions" value="201"/>
</dbReference>
<dbReference type="ComplexPortal" id="CPX-8070">
    <property type="entry name" value="SCC2-SCC4 cohesin loader complex"/>
</dbReference>
<dbReference type="CORUM" id="Q6KC79"/>
<dbReference type="DIP" id="DIP-29199N"/>
<dbReference type="FunCoup" id="Q6KC79">
    <property type="interactions" value="4712"/>
</dbReference>
<dbReference type="IntAct" id="Q6KC79">
    <property type="interactions" value="88"/>
</dbReference>
<dbReference type="MINT" id="Q6KC79"/>
<dbReference type="STRING" id="9606.ENSP00000282516"/>
<dbReference type="GlyCosmos" id="Q6KC79">
    <property type="glycosylation" value="8 sites, 1 glycan"/>
</dbReference>
<dbReference type="GlyGen" id="Q6KC79">
    <property type="glycosylation" value="18 sites, 3 N-linked glycans (3 sites), 1 O-linked glycan (15 sites)"/>
</dbReference>
<dbReference type="iPTMnet" id="Q6KC79"/>
<dbReference type="PhosphoSitePlus" id="Q6KC79"/>
<dbReference type="SwissPalm" id="Q6KC79"/>
<dbReference type="BioMuta" id="NIPBL"/>
<dbReference type="DMDM" id="50400865"/>
<dbReference type="jPOST" id="Q6KC79"/>
<dbReference type="MassIVE" id="Q6KC79"/>
<dbReference type="PaxDb" id="9606-ENSP00000282516"/>
<dbReference type="PeptideAtlas" id="Q6KC79"/>
<dbReference type="ProteomicsDB" id="66538">
    <molecule id="Q6KC79-1"/>
</dbReference>
<dbReference type="ProteomicsDB" id="66539">
    <molecule id="Q6KC79-2"/>
</dbReference>
<dbReference type="ProteomicsDB" id="66540">
    <molecule id="Q6KC79-3"/>
</dbReference>
<dbReference type="Pumba" id="Q6KC79"/>
<dbReference type="Antibodypedia" id="10283">
    <property type="antibodies" value="189 antibodies from 33 providers"/>
</dbReference>
<dbReference type="CPTC" id="Q6KC79">
    <property type="antibodies" value="1 antibody"/>
</dbReference>
<dbReference type="DNASU" id="25836"/>
<dbReference type="Ensembl" id="ENST00000282516.13">
    <molecule id="Q6KC79-1"/>
    <property type="protein sequence ID" value="ENSP00000282516.8"/>
    <property type="gene ID" value="ENSG00000164190.19"/>
</dbReference>
<dbReference type="Ensembl" id="ENST00000448238.2">
    <molecule id="Q6KC79-2"/>
    <property type="protein sequence ID" value="ENSP00000406266.2"/>
    <property type="gene ID" value="ENSG00000164190.19"/>
</dbReference>
<dbReference type="GeneID" id="25836"/>
<dbReference type="KEGG" id="hsa:25836"/>
<dbReference type="MANE-Select" id="ENST00000282516.13">
    <property type="protein sequence ID" value="ENSP00000282516.8"/>
    <property type="RefSeq nucleotide sequence ID" value="NM_133433.4"/>
    <property type="RefSeq protein sequence ID" value="NP_597677.2"/>
</dbReference>
<dbReference type="UCSC" id="uc003jkk.5">
    <molecule id="Q6KC79-1"/>
    <property type="organism name" value="human"/>
</dbReference>
<dbReference type="AGR" id="HGNC:28862"/>
<dbReference type="CTD" id="25836"/>
<dbReference type="DisGeNET" id="25836"/>
<dbReference type="GeneCards" id="NIPBL"/>
<dbReference type="GeneReviews" id="NIPBL"/>
<dbReference type="HGNC" id="HGNC:28862">
    <property type="gene designation" value="NIPBL"/>
</dbReference>
<dbReference type="HPA" id="ENSG00000164190">
    <property type="expression patterns" value="Low tissue specificity"/>
</dbReference>
<dbReference type="MalaCards" id="NIPBL"/>
<dbReference type="MIM" id="122470">
    <property type="type" value="phenotype"/>
</dbReference>
<dbReference type="MIM" id="608667">
    <property type="type" value="gene"/>
</dbReference>
<dbReference type="neXtProt" id="NX_Q6KC79"/>
<dbReference type="OpenTargets" id="ENSG00000164190"/>
<dbReference type="Orphanet" id="329802">
    <property type="disease" value="5p13 microduplication syndrome"/>
</dbReference>
<dbReference type="Orphanet" id="199">
    <property type="disease" value="Cornelia de Lange syndrome"/>
</dbReference>
<dbReference type="PharmGKB" id="PA134962343"/>
<dbReference type="VEuPathDB" id="HostDB:ENSG00000164190"/>
<dbReference type="eggNOG" id="KOG1020">
    <property type="taxonomic scope" value="Eukaryota"/>
</dbReference>
<dbReference type="GeneTree" id="ENSGT00390000010427"/>
<dbReference type="HOGENOM" id="CLU_000763_0_0_1"/>
<dbReference type="InParanoid" id="Q6KC79"/>
<dbReference type="OMA" id="KQNENRM"/>
<dbReference type="OrthoDB" id="418242at2759"/>
<dbReference type="PAN-GO" id="Q6KC79">
    <property type="GO annotations" value="9 GO annotations based on evolutionary models"/>
</dbReference>
<dbReference type="PhylomeDB" id="Q6KC79"/>
<dbReference type="TreeFam" id="TF313121"/>
<dbReference type="PathwayCommons" id="Q6KC79"/>
<dbReference type="Reactome" id="R-HSA-2470946">
    <property type="pathway name" value="Cohesin Loading onto Chromatin"/>
</dbReference>
<dbReference type="SignaLink" id="Q6KC79"/>
<dbReference type="SIGNOR" id="Q6KC79"/>
<dbReference type="BioGRID-ORCS" id="25836">
    <property type="hits" value="290 hits in 1165 CRISPR screens"/>
</dbReference>
<dbReference type="CD-CODE" id="91857CE7">
    <property type="entry name" value="Nucleolus"/>
</dbReference>
<dbReference type="ChiTaRS" id="NIPBL">
    <property type="organism name" value="human"/>
</dbReference>
<dbReference type="GeneWiki" id="NIPBL"/>
<dbReference type="GenomeRNAi" id="25836"/>
<dbReference type="Pharos" id="Q6KC79">
    <property type="development level" value="Tbio"/>
</dbReference>
<dbReference type="PRO" id="PR:Q6KC79"/>
<dbReference type="Proteomes" id="UP000005640">
    <property type="component" value="Chromosome 5"/>
</dbReference>
<dbReference type="RNAct" id="Q6KC79">
    <property type="molecule type" value="protein"/>
</dbReference>
<dbReference type="Bgee" id="ENSG00000164190">
    <property type="expression patterns" value="Expressed in male germ line stem cell (sensu Vertebrata) in testis and 196 other cell types or tissues"/>
</dbReference>
<dbReference type="ExpressionAtlas" id="Q6KC79">
    <property type="expression patterns" value="baseline and differential"/>
</dbReference>
<dbReference type="GO" id="GO:0000785">
    <property type="term" value="C:chromatin"/>
    <property type="evidence" value="ECO:0007669"/>
    <property type="project" value="Ensembl"/>
</dbReference>
<dbReference type="GO" id="GO:0005829">
    <property type="term" value="C:cytosol"/>
    <property type="evidence" value="ECO:0000314"/>
    <property type="project" value="HPA"/>
</dbReference>
<dbReference type="GO" id="GO:0070062">
    <property type="term" value="C:extracellular exosome"/>
    <property type="evidence" value="ECO:0007005"/>
    <property type="project" value="UniProtKB"/>
</dbReference>
<dbReference type="GO" id="GO:0032039">
    <property type="term" value="C:integrator complex"/>
    <property type="evidence" value="ECO:0000250"/>
    <property type="project" value="UniProtKB"/>
</dbReference>
<dbReference type="GO" id="GO:0043231">
    <property type="term" value="C:intracellular membrane-bounded organelle"/>
    <property type="evidence" value="ECO:0000314"/>
    <property type="project" value="HPA"/>
</dbReference>
<dbReference type="GO" id="GO:0005654">
    <property type="term" value="C:nucleoplasm"/>
    <property type="evidence" value="ECO:0000314"/>
    <property type="project" value="HPA"/>
</dbReference>
<dbReference type="GO" id="GO:0005634">
    <property type="term" value="C:nucleus"/>
    <property type="evidence" value="ECO:0000314"/>
    <property type="project" value="UniProtKB"/>
</dbReference>
<dbReference type="GO" id="GO:0090694">
    <property type="term" value="C:Scc2-Scc4 cohesin loading complex"/>
    <property type="evidence" value="ECO:0000314"/>
    <property type="project" value="UniProtKB"/>
</dbReference>
<dbReference type="GO" id="GO:0032116">
    <property type="term" value="C:SMC loading complex"/>
    <property type="evidence" value="ECO:0000314"/>
    <property type="project" value="UniProtKB"/>
</dbReference>
<dbReference type="GO" id="GO:0003682">
    <property type="term" value="F:chromatin binding"/>
    <property type="evidence" value="ECO:0000318"/>
    <property type="project" value="GO_Central"/>
</dbReference>
<dbReference type="GO" id="GO:0070087">
    <property type="term" value="F:chromo shadow domain binding"/>
    <property type="evidence" value="ECO:0000353"/>
    <property type="project" value="BHF-UCL"/>
</dbReference>
<dbReference type="GO" id="GO:0061775">
    <property type="term" value="F:cohesin loader activity"/>
    <property type="evidence" value="ECO:0000315"/>
    <property type="project" value="UniProtKB"/>
</dbReference>
<dbReference type="GO" id="GO:0042826">
    <property type="term" value="F:histone deacetylase binding"/>
    <property type="evidence" value="ECO:0000353"/>
    <property type="project" value="BHF-UCL"/>
</dbReference>
<dbReference type="GO" id="GO:0036033">
    <property type="term" value="F:mediator complex binding"/>
    <property type="evidence" value="ECO:0007669"/>
    <property type="project" value="Ensembl"/>
</dbReference>
<dbReference type="GO" id="GO:1990841">
    <property type="term" value="F:promoter-specific chromatin binding"/>
    <property type="evidence" value="ECO:0000250"/>
    <property type="project" value="ARUK-UCL"/>
</dbReference>
<dbReference type="GO" id="GO:0003714">
    <property type="term" value="F:transcription corepressor activity"/>
    <property type="evidence" value="ECO:0000314"/>
    <property type="project" value="BHF-UCL"/>
</dbReference>
<dbReference type="GO" id="GO:0007420">
    <property type="term" value="P:brain development"/>
    <property type="evidence" value="ECO:0000315"/>
    <property type="project" value="BHF-UCL"/>
</dbReference>
<dbReference type="GO" id="GO:0071481">
    <property type="term" value="P:cellular response to X-ray"/>
    <property type="evidence" value="ECO:0000315"/>
    <property type="project" value="UniProtKB"/>
</dbReference>
<dbReference type="GO" id="GO:0140588">
    <property type="term" value="P:chromatin looping"/>
    <property type="evidence" value="ECO:0007669"/>
    <property type="project" value="InterPro"/>
</dbReference>
<dbReference type="GO" id="GO:0006338">
    <property type="term" value="P:chromatin remodeling"/>
    <property type="evidence" value="ECO:0000314"/>
    <property type="project" value="BHF-UCL"/>
</dbReference>
<dbReference type="GO" id="GO:0050890">
    <property type="term" value="P:cognition"/>
    <property type="evidence" value="ECO:0000315"/>
    <property type="project" value="BHF-UCL"/>
</dbReference>
<dbReference type="GO" id="GO:0048589">
    <property type="term" value="P:developmental growth"/>
    <property type="evidence" value="ECO:0000315"/>
    <property type="project" value="BHF-UCL"/>
</dbReference>
<dbReference type="GO" id="GO:0048565">
    <property type="term" value="P:digestive tract development"/>
    <property type="evidence" value="ECO:0000318"/>
    <property type="project" value="GO_Central"/>
</dbReference>
<dbReference type="GO" id="GO:0006974">
    <property type="term" value="P:DNA damage response"/>
    <property type="evidence" value="ECO:0000315"/>
    <property type="project" value="UniProtKB"/>
</dbReference>
<dbReference type="GO" id="GO:0042471">
    <property type="term" value="P:ear morphogenesis"/>
    <property type="evidence" value="ECO:0000315"/>
    <property type="project" value="BHF-UCL"/>
</dbReference>
<dbReference type="GO" id="GO:0048557">
    <property type="term" value="P:embryonic digestive tract morphogenesis"/>
    <property type="evidence" value="ECO:0000315"/>
    <property type="project" value="BHF-UCL"/>
</dbReference>
<dbReference type="GO" id="GO:0035115">
    <property type="term" value="P:embryonic forelimb morphogenesis"/>
    <property type="evidence" value="ECO:0000315"/>
    <property type="project" value="BHF-UCL"/>
</dbReference>
<dbReference type="GO" id="GO:0048703">
    <property type="term" value="P:embryonic viscerocranium morphogenesis"/>
    <property type="evidence" value="ECO:0000318"/>
    <property type="project" value="GO_Central"/>
</dbReference>
<dbReference type="GO" id="GO:0034087">
    <property type="term" value="P:establishment of mitotic sister chromatid cohesion"/>
    <property type="evidence" value="ECO:0000318"/>
    <property type="project" value="GO_Central"/>
</dbReference>
<dbReference type="GO" id="GO:0071169">
    <property type="term" value="P:establishment of protein localization to chromatin"/>
    <property type="evidence" value="ECO:0000318"/>
    <property type="project" value="GO_Central"/>
</dbReference>
<dbReference type="GO" id="GO:0035261">
    <property type="term" value="P:external genitalia morphogenesis"/>
    <property type="evidence" value="ECO:0000315"/>
    <property type="project" value="BHF-UCL"/>
</dbReference>
<dbReference type="GO" id="GO:0048592">
    <property type="term" value="P:eye morphogenesis"/>
    <property type="evidence" value="ECO:0000315"/>
    <property type="project" value="BHF-UCL"/>
</dbReference>
<dbReference type="GO" id="GO:0060325">
    <property type="term" value="P:face morphogenesis"/>
    <property type="evidence" value="ECO:0000315"/>
    <property type="project" value="BHF-UCL"/>
</dbReference>
<dbReference type="GO" id="GO:0045444">
    <property type="term" value="P:fat cell differentiation"/>
    <property type="evidence" value="ECO:0007669"/>
    <property type="project" value="Ensembl"/>
</dbReference>
<dbReference type="GO" id="GO:0035136">
    <property type="term" value="P:forelimb morphogenesis"/>
    <property type="evidence" value="ECO:0000315"/>
    <property type="project" value="BHF-UCL"/>
</dbReference>
<dbReference type="GO" id="GO:0061010">
    <property type="term" value="P:gallbladder development"/>
    <property type="evidence" value="ECO:0000315"/>
    <property type="project" value="BHF-UCL"/>
</dbReference>
<dbReference type="GO" id="GO:0003007">
    <property type="term" value="P:heart morphogenesis"/>
    <property type="evidence" value="ECO:0000315"/>
    <property type="project" value="BHF-UCL"/>
</dbReference>
<dbReference type="GO" id="GO:0034088">
    <property type="term" value="P:maintenance of mitotic sister chromatid cohesion"/>
    <property type="evidence" value="ECO:0000315"/>
    <property type="project" value="UniProtKB"/>
</dbReference>
<dbReference type="GO" id="GO:0001656">
    <property type="term" value="P:metanephros development"/>
    <property type="evidence" value="ECO:0000303"/>
    <property type="project" value="BHF-UCL"/>
</dbReference>
<dbReference type="GO" id="GO:0007064">
    <property type="term" value="P:mitotic sister chromatid cohesion"/>
    <property type="evidence" value="ECO:0000314"/>
    <property type="project" value="UniProtKB"/>
</dbReference>
<dbReference type="GO" id="GO:0000070">
    <property type="term" value="P:mitotic sister chromatid segregation"/>
    <property type="evidence" value="ECO:0007669"/>
    <property type="project" value="Ensembl"/>
</dbReference>
<dbReference type="GO" id="GO:0000122">
    <property type="term" value="P:negative regulation of transcription by RNA polymerase II"/>
    <property type="evidence" value="ECO:0000314"/>
    <property type="project" value="BHF-UCL"/>
</dbReference>
<dbReference type="GO" id="GO:0003151">
    <property type="term" value="P:outflow tract morphogenesis"/>
    <property type="evidence" value="ECO:0000315"/>
    <property type="project" value="BHF-UCL"/>
</dbReference>
<dbReference type="GO" id="GO:0040018">
    <property type="term" value="P:positive regulation of multicellular organism growth"/>
    <property type="evidence" value="ECO:0007669"/>
    <property type="project" value="Ensembl"/>
</dbReference>
<dbReference type="GO" id="GO:2001224">
    <property type="term" value="P:positive regulation of neuron migration"/>
    <property type="evidence" value="ECO:0000250"/>
    <property type="project" value="UniProtKB"/>
</dbReference>
<dbReference type="GO" id="GO:0045778">
    <property type="term" value="P:positive regulation of ossification"/>
    <property type="evidence" value="ECO:0007669"/>
    <property type="project" value="Ensembl"/>
</dbReference>
<dbReference type="GO" id="GO:0045944">
    <property type="term" value="P:positive regulation of transcription by RNA polymerase II"/>
    <property type="evidence" value="ECO:0007669"/>
    <property type="project" value="Ensembl"/>
</dbReference>
<dbReference type="GO" id="GO:0008104">
    <property type="term" value="P:protein localization"/>
    <property type="evidence" value="ECO:0000315"/>
    <property type="project" value="UniProtKB"/>
</dbReference>
<dbReference type="GO" id="GO:0048638">
    <property type="term" value="P:regulation of developmental growth"/>
    <property type="evidence" value="ECO:0000315"/>
    <property type="project" value="BHF-UCL"/>
</dbReference>
<dbReference type="GO" id="GO:0045995">
    <property type="term" value="P:regulation of embryonic development"/>
    <property type="evidence" value="ECO:0000315"/>
    <property type="project" value="BHF-UCL"/>
</dbReference>
<dbReference type="GO" id="GO:0042634">
    <property type="term" value="P:regulation of hair cycle"/>
    <property type="evidence" value="ECO:0000315"/>
    <property type="project" value="BHF-UCL"/>
</dbReference>
<dbReference type="GO" id="GO:1990414">
    <property type="term" value="P:replication-born double-strand break repair via sister chromatid exchange"/>
    <property type="evidence" value="ECO:0000318"/>
    <property type="project" value="GO_Central"/>
</dbReference>
<dbReference type="GO" id="GO:0007605">
    <property type="term" value="P:sensory perception of sound"/>
    <property type="evidence" value="ECO:0000315"/>
    <property type="project" value="BHF-UCL"/>
</dbReference>
<dbReference type="GO" id="GO:0035019">
    <property type="term" value="P:somatic stem cell population maintenance"/>
    <property type="evidence" value="ECO:0007669"/>
    <property type="project" value="Ensembl"/>
</dbReference>
<dbReference type="GO" id="GO:0061038">
    <property type="term" value="P:uterus morphogenesis"/>
    <property type="evidence" value="ECO:0000315"/>
    <property type="project" value="BHF-UCL"/>
</dbReference>
<dbReference type="CDD" id="cd23958">
    <property type="entry name" value="SCC2"/>
    <property type="match status" value="1"/>
</dbReference>
<dbReference type="FunFam" id="1.25.10.10:FF:000225">
    <property type="entry name" value="Nipped-B protein"/>
    <property type="match status" value="1"/>
</dbReference>
<dbReference type="Gene3D" id="1.25.10.10">
    <property type="entry name" value="Leucine-rich Repeat Variant"/>
    <property type="match status" value="2"/>
</dbReference>
<dbReference type="InterPro" id="IPR011989">
    <property type="entry name" value="ARM-like"/>
</dbReference>
<dbReference type="InterPro" id="IPR016024">
    <property type="entry name" value="ARM-type_fold"/>
</dbReference>
<dbReference type="InterPro" id="IPR026003">
    <property type="entry name" value="Cohesin_HEAT"/>
</dbReference>
<dbReference type="InterPro" id="IPR024986">
    <property type="entry name" value="Nipped-B_C"/>
</dbReference>
<dbReference type="InterPro" id="IPR033031">
    <property type="entry name" value="Scc2/Nipped-B"/>
</dbReference>
<dbReference type="PANTHER" id="PTHR21704:SF18">
    <property type="entry name" value="NIPPED-B-LIKE PROTEIN"/>
    <property type="match status" value="1"/>
</dbReference>
<dbReference type="PANTHER" id="PTHR21704">
    <property type="entry name" value="NIPPED-B-LIKE PROTEIN DELANGIN SCC2-RELATED"/>
    <property type="match status" value="1"/>
</dbReference>
<dbReference type="Pfam" id="PF12765">
    <property type="entry name" value="Cohesin_HEAT"/>
    <property type="match status" value="1"/>
</dbReference>
<dbReference type="Pfam" id="PF12830">
    <property type="entry name" value="Nipped-B_C"/>
    <property type="match status" value="1"/>
</dbReference>
<dbReference type="SUPFAM" id="SSF48371">
    <property type="entry name" value="ARM repeat"/>
    <property type="match status" value="1"/>
</dbReference>
<reference key="1">
    <citation type="journal article" date="2004" name="Nat. Genet.">
        <title>NIPBL, encoding a homolog of fungal Scc2-type sister chromatid cohesion proteins and fly Nipped-B, is mutated in Cornelia de Lange syndrome.</title>
        <authorList>
            <person name="Tonkin E.T."/>
            <person name="Wang T.-J."/>
            <person name="Lisgo S."/>
            <person name="Bamshad M.J."/>
            <person name="Strachan T."/>
        </authorList>
    </citation>
    <scope>NUCLEOTIDE SEQUENCE [MRNA] (ISOFORMS 1 AND 2)</scope>
    <scope>TISSUE SPECIFICITY</scope>
    <scope>DEVELOPMENTAL STAGE</scope>
    <scope>VARIANTS CDLS1 ILE-1206 DEL; ARG-1311; ARG-1348 AND CYS-2430</scope>
</reference>
<reference key="2">
    <citation type="journal article" date="2007" name="BMC Genomics">
        <title>The full-ORF clone resource of the German cDNA consortium.</title>
        <authorList>
            <person name="Bechtel S."/>
            <person name="Rosenfelder H."/>
            <person name="Duda A."/>
            <person name="Schmidt C.P."/>
            <person name="Ernst U."/>
            <person name="Wellenreuther R."/>
            <person name="Mehrle A."/>
            <person name="Schuster C."/>
            <person name="Bahr A."/>
            <person name="Bloecker H."/>
            <person name="Heubner D."/>
            <person name="Hoerlein A."/>
            <person name="Michel G."/>
            <person name="Wedler H."/>
            <person name="Koehrer K."/>
            <person name="Ottenwaelder B."/>
            <person name="Poustka A."/>
            <person name="Wiemann S."/>
            <person name="Schupp I."/>
        </authorList>
    </citation>
    <scope>NUCLEOTIDE SEQUENCE [LARGE SCALE MRNA] OF 1-1175</scope>
    <source>
        <tissue>Endometrium</tissue>
    </source>
</reference>
<reference key="3">
    <citation type="journal article" date="2004" name="Nat. Genet.">
        <title>Complete sequencing and characterization of 21,243 full-length human cDNAs.</title>
        <authorList>
            <person name="Ota T."/>
            <person name="Suzuki Y."/>
            <person name="Nishikawa T."/>
            <person name="Otsuki T."/>
            <person name="Sugiyama T."/>
            <person name="Irie R."/>
            <person name="Wakamatsu A."/>
            <person name="Hayashi K."/>
            <person name="Sato H."/>
            <person name="Nagai K."/>
            <person name="Kimura K."/>
            <person name="Makita H."/>
            <person name="Sekine M."/>
            <person name="Obayashi M."/>
            <person name="Nishi T."/>
            <person name="Shibahara T."/>
            <person name="Tanaka T."/>
            <person name="Ishii S."/>
            <person name="Yamamoto J."/>
            <person name="Saito K."/>
            <person name="Kawai Y."/>
            <person name="Isono Y."/>
            <person name="Nakamura Y."/>
            <person name="Nagahari K."/>
            <person name="Murakami K."/>
            <person name="Yasuda T."/>
            <person name="Iwayanagi T."/>
            <person name="Wagatsuma M."/>
            <person name="Shiratori A."/>
            <person name="Sudo H."/>
            <person name="Hosoiri T."/>
            <person name="Kaku Y."/>
            <person name="Kodaira H."/>
            <person name="Kondo H."/>
            <person name="Sugawara M."/>
            <person name="Takahashi M."/>
            <person name="Kanda K."/>
            <person name="Yokoi T."/>
            <person name="Furuya T."/>
            <person name="Kikkawa E."/>
            <person name="Omura Y."/>
            <person name="Abe K."/>
            <person name="Kamihara K."/>
            <person name="Katsuta N."/>
            <person name="Sato K."/>
            <person name="Tanikawa M."/>
            <person name="Yamazaki M."/>
            <person name="Ninomiya K."/>
            <person name="Ishibashi T."/>
            <person name="Yamashita H."/>
            <person name="Murakawa K."/>
            <person name="Fujimori K."/>
            <person name="Tanai H."/>
            <person name="Kimata M."/>
            <person name="Watanabe M."/>
            <person name="Hiraoka S."/>
            <person name="Chiba Y."/>
            <person name="Ishida S."/>
            <person name="Ono Y."/>
            <person name="Takiguchi S."/>
            <person name="Watanabe S."/>
            <person name="Yosida M."/>
            <person name="Hotuta T."/>
            <person name="Kusano J."/>
            <person name="Kanehori K."/>
            <person name="Takahashi-Fujii A."/>
            <person name="Hara H."/>
            <person name="Tanase T.-O."/>
            <person name="Nomura Y."/>
            <person name="Togiya S."/>
            <person name="Komai F."/>
            <person name="Hara R."/>
            <person name="Takeuchi K."/>
            <person name="Arita M."/>
            <person name="Imose N."/>
            <person name="Musashino K."/>
            <person name="Yuuki H."/>
            <person name="Oshima A."/>
            <person name="Sasaki N."/>
            <person name="Aotsuka S."/>
            <person name="Yoshikawa Y."/>
            <person name="Matsunawa H."/>
            <person name="Ichihara T."/>
            <person name="Shiohata N."/>
            <person name="Sano S."/>
            <person name="Moriya S."/>
            <person name="Momiyama H."/>
            <person name="Satoh N."/>
            <person name="Takami S."/>
            <person name="Terashima Y."/>
            <person name="Suzuki O."/>
            <person name="Nakagawa S."/>
            <person name="Senoh A."/>
            <person name="Mizoguchi H."/>
            <person name="Goto Y."/>
            <person name="Shimizu F."/>
            <person name="Wakebe H."/>
            <person name="Hishigaki H."/>
            <person name="Watanabe T."/>
            <person name="Sugiyama A."/>
            <person name="Takemoto M."/>
            <person name="Kawakami B."/>
            <person name="Yamazaki M."/>
            <person name="Watanabe K."/>
            <person name="Kumagai A."/>
            <person name="Itakura S."/>
            <person name="Fukuzumi Y."/>
            <person name="Fujimori Y."/>
            <person name="Komiyama M."/>
            <person name="Tashiro H."/>
            <person name="Tanigami A."/>
            <person name="Fujiwara T."/>
            <person name="Ono T."/>
            <person name="Yamada K."/>
            <person name="Fujii Y."/>
            <person name="Ozaki K."/>
            <person name="Hirao M."/>
            <person name="Ohmori Y."/>
            <person name="Kawabata A."/>
            <person name="Hikiji T."/>
            <person name="Kobatake N."/>
            <person name="Inagaki H."/>
            <person name="Ikema Y."/>
            <person name="Okamoto S."/>
            <person name="Okitani R."/>
            <person name="Kawakami T."/>
            <person name="Noguchi S."/>
            <person name="Itoh T."/>
            <person name="Shigeta K."/>
            <person name="Senba T."/>
            <person name="Matsumura K."/>
            <person name="Nakajima Y."/>
            <person name="Mizuno T."/>
            <person name="Morinaga M."/>
            <person name="Sasaki M."/>
            <person name="Togashi T."/>
            <person name="Oyama M."/>
            <person name="Hata H."/>
            <person name="Watanabe M."/>
            <person name="Komatsu T."/>
            <person name="Mizushima-Sugano J."/>
            <person name="Satoh T."/>
            <person name="Shirai Y."/>
            <person name="Takahashi Y."/>
            <person name="Nakagawa K."/>
            <person name="Okumura K."/>
            <person name="Nagase T."/>
            <person name="Nomura N."/>
            <person name="Kikuchi H."/>
            <person name="Masuho Y."/>
            <person name="Yamashita R."/>
            <person name="Nakai K."/>
            <person name="Yada T."/>
            <person name="Nakamura Y."/>
            <person name="Ohara O."/>
            <person name="Isogai T."/>
            <person name="Sugano S."/>
        </authorList>
    </citation>
    <scope>NUCLEOTIDE SEQUENCE [LARGE SCALE MRNA] OF 128-2804 (ISOFORM 3)</scope>
    <source>
        <tissue>Cerebellum</tissue>
    </source>
</reference>
<reference key="4">
    <citation type="submission" date="1998-11" db="EMBL/GenBank/DDBJ databases">
        <authorList>
            <person name="Aihara T."/>
            <person name="Yasuo M."/>
            <person name="Kumiko K."/>
            <person name="Sasaki Y."/>
            <person name="Imaoka S."/>
            <person name="Monden M."/>
            <person name="Nakamura Y."/>
        </authorList>
    </citation>
    <scope>NUCLEOTIDE SEQUENCE [MRNA] OF 421-2804 (ISOFORMS 1 AND 2)</scope>
    <source>
        <tissue>Testis</tissue>
    </source>
</reference>
<reference key="5">
    <citation type="journal article" date="2004" name="Genome Res.">
        <title>The status, quality, and expansion of the NIH full-length cDNA project: the Mammalian Gene Collection (MGC).</title>
        <authorList>
            <consortium name="The MGC Project Team"/>
        </authorList>
    </citation>
    <scope>NUCLEOTIDE SEQUENCE [LARGE SCALE MRNA] OF 2411-2697 (ISOFORM 2)</scope>
    <source>
        <tissue>Urinary bladder</tissue>
    </source>
</reference>
<reference key="6">
    <citation type="journal article" date="2004" name="Nat. Genet.">
        <title>Cornelia de Lange syndrome is caused by mutations in NIPBL, the human homolog of Drosophila melanogaster Nipped-B.</title>
        <authorList>
            <person name="Krantz I.D."/>
            <person name="McCallum J."/>
            <person name="DeScipio C."/>
            <person name="Kaur M."/>
            <person name="Gillis L.A."/>
            <person name="Yaeger D."/>
            <person name="Jukofsky L."/>
            <person name="Wasserman N."/>
            <person name="Bottani A."/>
            <person name="Morris C.A."/>
            <person name="Nowaczyk M.J.M."/>
            <person name="Toriello H."/>
            <person name="Bamshad M.J."/>
            <person name="Carey J.C."/>
            <person name="Rappaport E."/>
            <person name="Kawauchi S."/>
            <person name="Lander A.D."/>
            <person name="Calof A.L."/>
            <person name="Li H.-H."/>
            <person name="Devoto M."/>
            <person name="Jackson L.G."/>
        </authorList>
    </citation>
    <scope>TISSUE SPECIFICITY</scope>
    <scope>INVOLVEMENT IN CDLS1</scope>
</reference>
<reference key="7">
    <citation type="journal article" date="2005" name="Biochem. Biophys. Res. Commun.">
        <title>The mammalian heterochromatin protein 1 binds diverse nuclear proteins through a common motif that targets the chromoshadow domain.</title>
        <authorList>
            <person name="Lechner M.S."/>
            <person name="Schultz D.C."/>
            <person name="Negorev D."/>
            <person name="Maul G.G."/>
            <person name="Rauscher F.J. III"/>
        </authorList>
    </citation>
    <scope>INTERACTION WITH CBX5</scope>
</reference>
<reference key="8">
    <citation type="journal article" date="2006" name="Cell">
        <title>Global, in vivo, and site-specific phosphorylation dynamics in signaling networks.</title>
        <authorList>
            <person name="Olsen J.V."/>
            <person name="Blagoev B."/>
            <person name="Gnad F."/>
            <person name="Macek B."/>
            <person name="Kumar C."/>
            <person name="Mortensen P."/>
            <person name="Mann M."/>
        </authorList>
    </citation>
    <scope>PHOSPHORYLATION [LARGE SCALE ANALYSIS] AT SER-318; THR-713; THR-746; SER-1096; SER-2658 AND THR-2667</scope>
    <scope>IDENTIFICATION BY MASS SPECTROMETRY [LARGE SCALE ANALYSIS]</scope>
    <source>
        <tissue>Cervix carcinoma</tissue>
    </source>
</reference>
<reference key="9">
    <citation type="journal article" date="2006" name="Curr. Biol.">
        <title>Human Scc4 is required for cohesin binding to chromatin, sister-chromatid cohesion, and mitotic progression.</title>
        <authorList>
            <person name="Watrin E."/>
            <person name="Schleiffer A."/>
            <person name="Tanaka K."/>
            <person name="Eisenhaber F."/>
            <person name="Nasmyth K."/>
            <person name="Peters J.M."/>
        </authorList>
    </citation>
    <scope>INTERACTION WITH SCC4</scope>
</reference>
<reference key="10">
    <citation type="journal article" date="2006" name="Nat. Biotechnol.">
        <title>A probability-based approach for high-throughput protein phosphorylation analysis and site localization.</title>
        <authorList>
            <person name="Beausoleil S.A."/>
            <person name="Villen J."/>
            <person name="Gerber S.A."/>
            <person name="Rush J."/>
            <person name="Gygi S.P."/>
        </authorList>
    </citation>
    <scope>PHOSPHORYLATION [LARGE SCALE ANALYSIS] AT SER-2658</scope>
    <scope>IDENTIFICATION BY MASS SPECTROMETRY [LARGE SCALE ANALYSIS]</scope>
    <source>
        <tissue>Cervix carcinoma</tissue>
    </source>
</reference>
<reference key="11">
    <citation type="journal article" date="2006" name="PLoS Biol.">
        <title>Metazoan Scc4 homologs link sister chromatid cohesion to cell and axon migration guidance.</title>
        <authorList>
            <person name="Seitan V.C."/>
            <person name="Banks P."/>
            <person name="Laval S."/>
            <person name="Majid N.A."/>
            <person name="Dorsett D."/>
            <person name="Rana A."/>
            <person name="Smith J."/>
            <person name="Bateman A."/>
            <person name="Krpic S."/>
            <person name="Hostert A."/>
            <person name="Rollins R.A."/>
            <person name="Erdjument-Bromage H."/>
            <person name="Tempst P."/>
            <person name="Benard C.Y."/>
            <person name="Hekimi S."/>
            <person name="Newbury S.F."/>
            <person name="Strachan T."/>
        </authorList>
    </citation>
    <scope>INTERACTION WITH SCC4</scope>
</reference>
<reference key="12">
    <citation type="journal article" date="2007" name="Science">
        <title>ATM and ATR substrate analysis reveals extensive protein networks responsive to DNA damage.</title>
        <authorList>
            <person name="Matsuoka S."/>
            <person name="Ballif B.A."/>
            <person name="Smogorzewska A."/>
            <person name="McDonald E.R. III"/>
            <person name="Hurov K.E."/>
            <person name="Luo J."/>
            <person name="Bakalarski C.E."/>
            <person name="Zhao Z."/>
            <person name="Solimini N."/>
            <person name="Lerenthal Y."/>
            <person name="Shiloh Y."/>
            <person name="Gygi S.P."/>
            <person name="Elledge S.J."/>
        </authorList>
    </citation>
    <scope>IDENTIFICATION BY MASS SPECTROMETRY [LARGE SCALE ANALYSIS]</scope>
    <source>
        <tissue>Embryonic kidney</tissue>
    </source>
</reference>
<reference key="13">
    <citation type="journal article" date="2008" name="Mol. Cell">
        <title>Kinase-selective enrichment enables quantitative phosphoproteomics of the kinome across the cell cycle.</title>
        <authorList>
            <person name="Daub H."/>
            <person name="Olsen J.V."/>
            <person name="Bairlein M."/>
            <person name="Gnad F."/>
            <person name="Oppermann F.S."/>
            <person name="Korner R."/>
            <person name="Greff Z."/>
            <person name="Keri G."/>
            <person name="Stemmann O."/>
            <person name="Mann M."/>
        </authorList>
    </citation>
    <scope>PHOSPHORYLATION [LARGE SCALE ANALYSIS] AT SER-2658</scope>
    <scope>IDENTIFICATION BY MASS SPECTROMETRY [LARGE SCALE ANALYSIS]</scope>
    <source>
        <tissue>Cervix carcinoma</tissue>
    </source>
</reference>
<reference key="14">
    <citation type="journal article" date="2008" name="Proc. Natl. Acad. Sci. U.S.A.">
        <title>A quantitative atlas of mitotic phosphorylation.</title>
        <authorList>
            <person name="Dephoure N."/>
            <person name="Zhou C."/>
            <person name="Villen J."/>
            <person name="Beausoleil S.A."/>
            <person name="Bakalarski C.E."/>
            <person name="Elledge S.J."/>
            <person name="Gygi S.P."/>
        </authorList>
    </citation>
    <scope>PHOSPHORYLATION [LARGE SCALE ANALYSIS] AT SER-150; SER-162; SER-306; SER-350; SER-912; SER-1089; SER-1090; SER-1096; SER-1150; SER-1152; SER-1154; SER-1160; SER-2509; SER-2511; SER-2513; SER-2515 AND SER-2658</scope>
    <scope>PHOSPHORYLATION [LARGE SCALE ANALYSIS] AT THR-2667 AND SER-2672 (ISOFORM 2)</scope>
    <scope>IDENTIFICATION BY MASS SPECTROMETRY [LARGE SCALE ANALYSIS]</scope>
    <source>
        <tissue>Cervix carcinoma</tissue>
    </source>
</reference>
<reference key="15">
    <citation type="journal article" date="2009" name="Anal. Chem.">
        <title>Lys-N and trypsin cover complementary parts of the phosphoproteome in a refined SCX-based approach.</title>
        <authorList>
            <person name="Gauci S."/>
            <person name="Helbig A.O."/>
            <person name="Slijper M."/>
            <person name="Krijgsveld J."/>
            <person name="Heck A.J."/>
            <person name="Mohammed S."/>
        </authorList>
    </citation>
    <scope>IDENTIFICATION BY MASS SPECTROMETRY [LARGE SCALE ANALYSIS]</scope>
</reference>
<reference key="16">
    <citation type="journal article" date="2009" name="Mol. Cell. Proteomics">
        <title>Large-scale proteomics analysis of the human kinome.</title>
        <authorList>
            <person name="Oppermann F.S."/>
            <person name="Gnad F."/>
            <person name="Olsen J.V."/>
            <person name="Hornberger R."/>
            <person name="Greff Z."/>
            <person name="Keri G."/>
            <person name="Mann M."/>
            <person name="Daub H."/>
        </authorList>
    </citation>
    <scope>PHOSPHORYLATION [LARGE SCALE ANALYSIS] AT SER-2658</scope>
    <scope>IDENTIFICATION BY MASS SPECTROMETRY [LARGE SCALE ANALYSIS]</scope>
</reference>
<reference key="17">
    <citation type="journal article" date="2009" name="Sci. Signal.">
        <title>Quantitative phosphoproteomic analysis of T cell receptor signaling reveals system-wide modulation of protein-protein interactions.</title>
        <authorList>
            <person name="Mayya V."/>
            <person name="Lundgren D.H."/>
            <person name="Hwang S.-I."/>
            <person name="Rezaul K."/>
            <person name="Wu L."/>
            <person name="Eng J.K."/>
            <person name="Rodionov V."/>
            <person name="Han D.K."/>
        </authorList>
    </citation>
    <scope>PHOSPHORYLATION [LARGE SCALE ANALYSIS] AT SER-1089; SER-1090; SER-1096; SER-1150 AND SER-2658</scope>
    <scope>IDENTIFICATION BY MASS SPECTROMETRY [LARGE SCALE ANALYSIS]</scope>
    <source>
        <tissue>Leukemic T-cell</tissue>
    </source>
</reference>
<reference key="18">
    <citation type="journal article" date="2009" name="Science">
        <title>Lysine acetylation targets protein complexes and co-regulates major cellular functions.</title>
        <authorList>
            <person name="Choudhary C."/>
            <person name="Kumar C."/>
            <person name="Gnad F."/>
            <person name="Nielsen M.L."/>
            <person name="Rehman M."/>
            <person name="Walther T.C."/>
            <person name="Olsen J.V."/>
            <person name="Mann M."/>
        </authorList>
    </citation>
    <scope>IDENTIFICATION BY MASS SPECTROMETRY [LARGE SCALE ANALYSIS]</scope>
</reference>
<reference key="19">
    <citation type="journal article" date="2010" name="Nat. Cell Biol.">
        <title>Human POGZ modulates dissociation of HP1alpha from mitotic chromosome arms through Aurora B activation.</title>
        <authorList>
            <person name="Nozawa R.S."/>
            <person name="Nagao K."/>
            <person name="Masuda H.T."/>
            <person name="Iwasaki O."/>
            <person name="Hirota T."/>
            <person name="Nozaki N."/>
            <person name="Kimura H."/>
            <person name="Obuse C."/>
        </authorList>
    </citation>
    <scope>INTERACTION WITH CBX5</scope>
    <scope>MUTAGENESIS OF VAL-1003 AND LEU-1005</scope>
</reference>
<reference key="20">
    <citation type="journal article" date="2010" name="Sci. Signal.">
        <title>Quantitative phosphoproteomics reveals widespread full phosphorylation site occupancy during mitosis.</title>
        <authorList>
            <person name="Olsen J.V."/>
            <person name="Vermeulen M."/>
            <person name="Santamaria A."/>
            <person name="Kumar C."/>
            <person name="Miller M.L."/>
            <person name="Jensen L.J."/>
            <person name="Gnad F."/>
            <person name="Cox J."/>
            <person name="Jensen T.S."/>
            <person name="Nigg E.A."/>
            <person name="Brunak S."/>
            <person name="Mann M."/>
        </authorList>
    </citation>
    <scope>PHOSPHORYLATION [LARGE SCALE ANALYSIS] AT SER-256; SER-318; SER-350; SER-2658 AND SER-2672</scope>
    <scope>IDENTIFICATION BY MASS SPECTROMETRY [LARGE SCALE ANALYSIS]</scope>
    <source>
        <tissue>Cervix carcinoma</tissue>
    </source>
</reference>
<reference key="21">
    <citation type="journal article" date="2011" name="BMC Syst. Biol.">
        <title>Initial characterization of the human central proteome.</title>
        <authorList>
            <person name="Burkard T.R."/>
            <person name="Planyavsky M."/>
            <person name="Kaupe I."/>
            <person name="Breitwieser F.P."/>
            <person name="Buerckstuemmer T."/>
            <person name="Bennett K.L."/>
            <person name="Superti-Furga G."/>
            <person name="Colinge J."/>
        </authorList>
    </citation>
    <scope>IDENTIFICATION BY MASS SPECTROMETRY [LARGE SCALE ANALYSIS]</scope>
</reference>
<reference key="22">
    <citation type="journal article" date="2011" name="Sci. Signal.">
        <title>System-wide temporal characterization of the proteome and phosphoproteome of human embryonic stem cell differentiation.</title>
        <authorList>
            <person name="Rigbolt K.T."/>
            <person name="Prokhorova T.A."/>
            <person name="Akimov V."/>
            <person name="Henningsen J."/>
            <person name="Johansen P.T."/>
            <person name="Kratchmarova I."/>
            <person name="Kassem M."/>
            <person name="Mann M."/>
            <person name="Olsen J.V."/>
            <person name="Blagoev B."/>
        </authorList>
    </citation>
    <scope>PHOSPHORYLATION [LARGE SCALE ANALYSIS] AT SER-350; SER-1096; SER-1150; SER-1152; SER-1154; SER-1160; SER-2509; SER-2511; SER-2513; SER-2515; SER-2658; THR-2667 AND SER-2672</scope>
    <scope>PHOSPHORYLATION [LARGE SCALE ANALYSIS] AT SER-2672 (ISOFORM 2)</scope>
    <scope>IDENTIFICATION BY MASS SPECTROMETRY [LARGE SCALE ANALYSIS]</scope>
</reference>
<reference key="23">
    <citation type="journal article" date="2012" name="Proc. Natl. Acad. Sci. U.S.A.">
        <title>In vitro loading of human cohesin on DNA by the human Scc2-Scc4 loader complex.</title>
        <authorList>
            <person name="Bermudez V.P."/>
            <person name="Farina A."/>
            <person name="Higashi T.L."/>
            <person name="Du F."/>
            <person name="Tappin I."/>
            <person name="Takahashi T.S."/>
            <person name="Hurwitz J."/>
        </authorList>
    </citation>
    <scope>FUNCTION</scope>
    <scope>INTERACTION WITH MAU2; HETERODIMER SMC1A-SMC3 AND THE COHESIN COMPLEX</scope>
</reference>
<reference key="24">
    <citation type="journal article" date="2013" name="J. Proteome Res.">
        <title>Toward a comprehensive characterization of a human cancer cell phosphoproteome.</title>
        <authorList>
            <person name="Zhou H."/>
            <person name="Di Palma S."/>
            <person name="Preisinger C."/>
            <person name="Peng M."/>
            <person name="Polat A.N."/>
            <person name="Heck A.J."/>
            <person name="Mohammed S."/>
        </authorList>
    </citation>
    <scope>PHOSPHORYLATION [LARGE SCALE ANALYSIS] AT SER-150; SER-243; SER-274; SER-280; SER-306; SER-318; SER-350; SER-912; THR-1189; SER-1197; SER-2652; SER-2658; THR-2667 AND SER-2672</scope>
    <scope>IDENTIFICATION BY MASS SPECTROMETRY [LARGE SCALE ANALYSIS]</scope>
    <source>
        <tissue>Cervix carcinoma</tissue>
        <tissue>Erythroleukemia</tissue>
    </source>
</reference>
<reference key="25">
    <citation type="journal article" date="2014" name="J. Proteomics">
        <title>An enzyme assisted RP-RPLC approach for in-depth analysis of human liver phosphoproteome.</title>
        <authorList>
            <person name="Bian Y."/>
            <person name="Song C."/>
            <person name="Cheng K."/>
            <person name="Dong M."/>
            <person name="Wang F."/>
            <person name="Huang J."/>
            <person name="Sun D."/>
            <person name="Wang L."/>
            <person name="Ye M."/>
            <person name="Zou H."/>
        </authorList>
    </citation>
    <scope>PHOSPHORYLATION [LARGE SCALE ANALYSIS] AT SER-280; SER-2658 AND SER-2672</scope>
    <scope>PHOSPHORYLATION [LARGE SCALE ANALYSIS] AT SER-2672 (ISOFORM 2)</scope>
    <scope>IDENTIFICATION BY MASS SPECTROMETRY [LARGE SCALE ANALYSIS]</scope>
    <source>
        <tissue>Liver</tissue>
    </source>
</reference>
<reference key="26">
    <citation type="journal article" date="2017" name="Elife">
        <title>Scc2/Nipbl hops between chromosomal cohesin rings after loading.</title>
        <authorList>
            <person name="Rhodes J."/>
            <person name="Mazza D."/>
            <person name="Nasmyth K."/>
            <person name="Uphoff S."/>
        </authorList>
    </citation>
    <scope>FUNCTION</scope>
    <scope>SUBCELLULAR LOCATION</scope>
</reference>
<reference evidence="26 27" key="27">
    <citation type="journal article" date="2020" name="Science">
        <title>Cryo-EM structure of the human cohesin-NIPBL-DNA complex.</title>
        <authorList>
            <person name="Shi Z."/>
            <person name="Gao H."/>
            <person name="Bai X.C."/>
            <person name="Yu H."/>
        </authorList>
    </citation>
    <scope>STRUCTURE BY ELECTRON MICROSCOPY (3.90 ANGSTROMS) OF 1163-2804</scope>
    <scope>INTERACTION WITH THE COHESIN COMPLEX</scope>
</reference>
<reference key="28">
    <citation type="journal article" date="2004" name="Am. J. Hum. Genet.">
        <title>NIPBL mutational analysis in 120 individuals with Cornelia de Lange syndrome and evaluation of genotype-phenotype correlations.</title>
        <authorList>
            <person name="Gillis L.A."/>
            <person name="McCallum J."/>
            <person name="Kaur M."/>
            <person name="DeScipio C."/>
            <person name="Yaeger D."/>
            <person name="Mariani A."/>
            <person name="Kline A.D."/>
            <person name="Li H."/>
            <person name="Devoto M."/>
            <person name="Jackson L.G."/>
            <person name="Krantz I.D."/>
        </authorList>
    </citation>
    <scope>VARIANTS CDLS1 GLY-1246; PRO-1312; LEU-1789; VAL-1803; THR-1856; CYS-2298; HIS-2298; ARG-2312; ALA-2381; THR-2390 AND HIS-2440</scope>
    <scope>VARIANTS SER-674 AND VAL-1206</scope>
</reference>
<reference key="29">
    <citation type="journal article" date="2006" name="Science">
        <title>The consensus coding sequences of human breast and colorectal cancers.</title>
        <authorList>
            <person name="Sjoeblom T."/>
            <person name="Jones S."/>
            <person name="Wood L.D."/>
            <person name="Parsons D.W."/>
            <person name="Lin J."/>
            <person name="Barber T.D."/>
            <person name="Mandelker D."/>
            <person name="Leary R.J."/>
            <person name="Ptak J."/>
            <person name="Silliman N."/>
            <person name="Szabo S."/>
            <person name="Buckhaults P."/>
            <person name="Farrell C."/>
            <person name="Meeh P."/>
            <person name="Markowitz S.D."/>
            <person name="Willis J."/>
            <person name="Dawson D."/>
            <person name="Willson J.K.V."/>
            <person name="Gazdar A.F."/>
            <person name="Hartigan J."/>
            <person name="Wu L."/>
            <person name="Liu C."/>
            <person name="Parmigiani G."/>
            <person name="Park B.H."/>
            <person name="Bachman K.E."/>
            <person name="Papadopoulos N."/>
            <person name="Vogelstein B."/>
            <person name="Kinzler K.W."/>
            <person name="Velculescu V.E."/>
        </authorList>
    </citation>
    <scope>VARIANT [LARGE SCALE ANALYSIS] LYS-1647</scope>
</reference>
<reference key="30">
    <citation type="journal article" date="2010" name="Am. J. Med. Genet. A">
        <title>Mutations and variants in the cohesion factor genes NIPBL, SMC1A, and SMC3 in a cohort of 30 unrelated patients with Cornelia de Lange syndrome.</title>
        <authorList>
            <person name="Pie J."/>
            <person name="Gil-Rodriguez M.C."/>
            <person name="Ciero M."/>
            <person name="Lopez-Vinas E."/>
            <person name="Ribate M.P."/>
            <person name="Arnedo M."/>
            <person name="Deardorff M.A."/>
            <person name="Puisac B."/>
            <person name="Legarreta J."/>
            <person name="de Karam J.C."/>
            <person name="Rubio E."/>
            <person name="Bueno I."/>
            <person name="Baldellou A."/>
            <person name="Calvo M.T."/>
            <person name="Casals N."/>
            <person name="Olivares J.L."/>
            <person name="Losada A."/>
            <person name="Hegardt F.G."/>
            <person name="Krantz I.D."/>
            <person name="Gomez-Puertas P."/>
            <person name="Ramos F.J."/>
        </authorList>
    </citation>
    <scope>VARIANTS CDLS1 ASN-1897 DEL; ALA-2081; ILE-2090 AND PRO-2150</scope>
</reference>
<reference key="31">
    <citation type="journal article" date="2010" name="Ann. Clin. Lab. Sci.">
        <title>Clinical and genetic analysis of Korean patients with Cornelia de Lange syndrome: two novel NIPBL mutations.</title>
        <authorList>
            <person name="Park H.D."/>
            <person name="Ki C.S."/>
            <person name="Kim J.W."/>
            <person name="Kim W.T."/>
            <person name="Kim J.K."/>
        </authorList>
    </citation>
    <scope>VARIANTS CDLS1 LEU-73 AND PRO-1343</scope>
</reference>
<reference key="32">
    <citation type="journal article" date="2012" name="Eur. J. Hum. Genet.">
        <title>Isolated NIBPL missense mutations that cause Cornelia de Lange syndrome alter MAU2 interaction.</title>
        <authorList>
            <person name="Braunholz D."/>
            <person name="Hullings M."/>
            <person name="Gil-Rodriguez M.C."/>
            <person name="Fincher C.T."/>
            <person name="Mallozzi M.B."/>
            <person name="Loy E."/>
            <person name="Albrecht M."/>
            <person name="Kaur M."/>
            <person name="Limon J."/>
            <person name="Rampuria A."/>
            <person name="Clark D."/>
            <person name="Kline A."/>
            <person name="Dalski A."/>
            <person name="Eckhold J."/>
            <person name="Tzschach A."/>
            <person name="Hennekam R."/>
            <person name="Gillessen-Kaesbach G."/>
            <person name="Wierzba J."/>
            <person name="Krantz I.D."/>
            <person name="Deardorff M.A."/>
            <person name="Kaiser F.J."/>
        </authorList>
    </citation>
    <scope>VARIANTS CDLS1 ARG-15; GLN-29; THR-111; SER-179; THR-179; LEU-192; GLY-246 AND VAL-254</scope>
    <scope>CHARACTERIZATION OF VARIANTS CDLS1 ARG-15; GLN-29; THR-111; SER-179; THR-179; LEU-192; GLY-246 AND VAL-254</scope>
    <scope>INTERACTION WITH SCC4</scope>
</reference>
<reference key="33">
    <citation type="journal article" date="2013" name="J. Appl. Genet.">
        <title>Spectrum of NIPBL gene mutations in Polish patients with Cornelia de Lange syndrome.</title>
        <authorList>
            <person name="Kuzniacka A."/>
            <person name="Wierzba J."/>
            <person name="Ratajska M."/>
            <person name="Lipska B.S."/>
            <person name="Koczkowska M."/>
            <person name="Malinowska M."/>
            <person name="Limon J."/>
        </authorList>
    </citation>
    <scope>VARIANTS CDLS1 ILE-70; SER-179; GLY-246; THR-351; ASN-357; GLN-868; LYS-1207; LEU-1441; PHE-1625; LEU-1637; HIS-1722; ASN-2218 DEL; CYS-2298; VAL-2312 AND ASN-2433</scope>
</reference>
<reference key="34">
    <citation type="journal article" date="2015" name="Gene">
        <title>Two novel NIPBL gene mutations in Chinese patients with Cornelia de Lange syndrome.</title>
        <authorList>
            <person name="Mei L."/>
            <person name="Liang D."/>
            <person name="Huang Y."/>
            <person name="Pan Q."/>
            <person name="Wu L."/>
        </authorList>
    </citation>
    <scope>VARIANT CDLS1 PHE-2091</scope>
</reference>
<reference key="35">
    <citation type="journal article" date="2017" name="J. Cell Sci.">
        <title>Independent mechanisms recruit the cohesin loader protein NIPBL to sites of DNA damage.</title>
        <authorList>
            <person name="Bot C."/>
            <person name="Pfeiffer A."/>
            <person name="Giordano F."/>
            <person name="Manjeera D.E."/>
            <person name="Dantuma N.P."/>
            <person name="Stroem L."/>
        </authorList>
    </citation>
    <scope>CHARACTERIZATION OF VARIANT CDLS1 ARG-15</scope>
    <scope>FUNCTION</scope>
    <scope>SUBCELLULAR LOCATION</scope>
    <scope>INTERACTION WITH SCC4 AND CBX3</scope>
    <scope>MUTAGENESIS OF VAL-1003 AND LEU-1005</scope>
    <scope>MOTIF PXVXL</scope>
</reference>
<name>NIPBL_HUMAN</name>
<comment type="function">
    <text evidence="1 14 17 18">Plays an important role in the loading of the cohesin complex on to DNA. Forms a heterodimeric complex (also known as cohesin loading complex) with MAU2/SCC4 which mediates the loading of the cohesin complex onto chromatin (PubMed:22628566, PubMed:28914604). Plays a role in cohesin loading at sites of DNA damage. Its recruitment to double-strand breaks (DSBs) sites occurs in a CBX3-, RNF8- and RNF168-dependent manner whereas its recruitment to UV irradiation-induced DNA damage sites occurs in a ATM-, ATR-, RNF8- and RNF168-dependent manner (PubMed:28167679). Along with ZNF609, promotes cortical neuron migration during brain development by regulating the transcription of crucial genes in this process. Preferentially binds promoters containing paused RNA polymerase II. Up-regulates the expression of SEMA3A, NRP1, PLXND1 and GABBR2 genes, among others (By similarity).</text>
</comment>
<comment type="subunit">
    <text evidence="1 6 7 8 12 13 14 17 19">Heterodimerizes with MAU2/SCC4 to form the cohesin loading complex (PubMed:16682347, PubMed:16802858, PubMed:21934712, PubMed:22628566, PubMed:28167679). The NIPBL-MAU2 heterodimer interacts with the cohesin complex composed of SMC1A/B and SMC3 heterodimer, RAD21 and STAG1/SA1 (PubMed:22628566). NIPBL directly contacts all members of the complex, RAD21, SMC1A/B, SMC3 and STAG1 (PubMed:32409525). Interacts directly (via PxVxL motif) with CBX5 (PubMed:15882967, PubMed:20562864). Interacts with ZNF609 (via N-terminus) (By similarity). Interacts with the multiprotein complex Integrator (By similarity). Interacts (via PxVxL motif) with CBX3 (PubMed:28167679). Interacts with BRD4 (By similarity).</text>
</comment>
<comment type="interaction">
    <interactant intactId="EBI-722767">
        <id>Q6KC79</id>
    </interactant>
    <interactant intactId="EBI-4395624">
        <id>Q9Y6X3</id>
        <label>MAU2</label>
    </interactant>
    <organismsDiffer>false</organismsDiffer>
    <experiments>7</experiments>
</comment>
<comment type="subcellular location">
    <subcellularLocation>
        <location evidence="17 18">Nucleus</location>
    </subcellularLocation>
    <subcellularLocation>
        <location evidence="1">Chromosome</location>
    </subcellularLocation>
</comment>
<comment type="alternative products">
    <event type="alternative splicing"/>
    <isoform>
        <id>Q6KC79-1</id>
        <name>1</name>
        <name>A</name>
        <name>IDN3-A</name>
        <sequence type="displayed"/>
    </isoform>
    <isoform>
        <id>Q6KC79-2</id>
        <name>2</name>
        <name>B</name>
        <name>IDN3-B</name>
        <sequence type="described" ref="VSP_011092 VSP_011093"/>
    </isoform>
    <isoform>
        <id>Q6KC79-3</id>
        <name>3</name>
        <sequence type="described" ref="VSP_011091"/>
    </isoform>
</comment>
<comment type="tissue specificity">
    <text evidence="3 4">Widely expressed. Highly expressed in heart, skeletal muscle, fetal and adult liver, fetal and adult kidney. Expressed at intermediates level in thymus, placenta, peripheral leukocyte and small intestine. Weakly or not expressed in brain, colon, spleen and lung.</text>
</comment>
<comment type="developmental stage">
    <text evidence="3">In embryos, it is expressed in developing limbs and later in cartilage primordia of the ulna and of various hand bones. Sites of craniofacial expression include the cartilage primordium of the basioccipital and basisphenoid skull bones and elsewhere in the head and face, including a region encompassing the mesenchyme adjacent to the cochlear canal. Also expressed in the spinal column, notochord and surface ectoderm sclerotome and what seem to be migrating myoblasts. Expressed in the developing heart in the atrial and ventricular myocardium and in the ventricular tubeculae but absent in the endocardial cushions. Also expressed in the developing esophagus, trachea and midgut loops, in the bronchi of the lung and in the tubules of the metanephros. Expression in organs and tissues not typically affected in CDL (e.g. the developing trachea, bronchi, esophagus, heart and kidney) may reflect a bias towards underreporting of more subtle aspects of the phenotype or problems that typically present later in life. Expressed in the mesenchyme surrounding the cochlear canal possibly reflecting the hearing impairment commonly found. Weakly or not expressed in embryonic brain.</text>
</comment>
<comment type="domain">
    <text evidence="12 17">Contains one Pro-Xaa-Val-Xaa-Leu (PxVxL) motif, which is required for interaction with chromoshadow domains. This motif requires additional residues -7, -6, +4 and +5 of the central Val which contact the chromoshadow domain.</text>
</comment>
<comment type="domain">
    <text evidence="17">The C-terminal region containing HEAT repeats and Pro-Xaa-Val-Xaa-Leu (PxVxL) motif are involved in the recruitment of NIPBL to sites of DNA damage.</text>
</comment>
<comment type="disease" evidence="3 4 5 10 11 13 15 16 17">
    <disease id="DI-00379">
        <name>Cornelia de Lange syndrome 1</name>
        <acronym>CDLS1</acronym>
        <description>A form of Cornelia de Lange syndrome, a clinically heterogeneous developmental disorder associated with malformations affecting multiple systems. Characterized by facial dysmorphisms, abnormal hands and feet, growth delay, cognitive retardation, hirsutism, gastroesophageal dysfunction and cardiac, ophthalmologic and genitourinary anomalies.</description>
        <dbReference type="MIM" id="122470"/>
    </disease>
    <text>The disease is caused by variants affecting the gene represented in this entry.</text>
</comment>
<comment type="similarity">
    <text evidence="25">Belongs to the SCC2/Nipped-B family.</text>
</comment>
<comment type="sequence caution" evidence="25">
    <conflict type="erroneous initiation">
        <sequence resource="EMBL-CDS" id="AAH33847"/>
    </conflict>
</comment>
<comment type="sequence caution" evidence="25">
    <conflict type="miscellaneous discrepancy">
        <sequence resource="EMBL-CDS" id="BAA77335"/>
    </conflict>
    <text>Chimeric cDNA.</text>
</comment>
<comment type="sequence caution" evidence="25">
    <conflict type="miscellaneous discrepancy">
        <sequence resource="EMBL-CDS" id="BAA77349"/>
    </conflict>
    <text>Chimeric cDNA.</text>
</comment>
<comment type="sequence caution" evidence="25">
    <conflict type="erroneous initiation">
        <sequence resource="EMBL-CDS" id="BAC86701"/>
    </conflict>
</comment>
<comment type="sequence caution" evidence="25">
    <conflict type="frameshift">
        <sequence resource="EMBL-CDS" id="CAE45790"/>
    </conflict>
</comment>
<proteinExistence type="evidence at protein level"/>